<protein>
    <recommendedName>
        <fullName>Heptaprenyl diphosphate synthase component 2</fullName>
        <shortName>HepPP synthase subunit 2</shortName>
        <ecNumber>2.5.1.30</ecNumber>
    </recommendedName>
    <alternativeName>
        <fullName>Spore germination protein C3</fullName>
    </alternativeName>
</protein>
<reference key="1">
    <citation type="submission" date="1992-01" db="EMBL/GenBank/DDBJ databases">
        <title>Sequence of Bacillus subtilis dbpA, mtr(A,B), gerC(1-3), ndk, cheR, aro(B,E,F,H), trp(A-F), hisH, and tyrA genes.</title>
        <authorList>
            <person name="Henner D.J."/>
        </authorList>
    </citation>
    <scope>NUCLEOTIDE SEQUENCE [GENOMIC DNA]</scope>
    <source>
        <strain>168</strain>
    </source>
</reference>
<reference key="2">
    <citation type="journal article" date="1997" name="Nature">
        <title>The complete genome sequence of the Gram-positive bacterium Bacillus subtilis.</title>
        <authorList>
            <person name="Kunst F."/>
            <person name="Ogasawara N."/>
            <person name="Moszer I."/>
            <person name="Albertini A.M."/>
            <person name="Alloni G."/>
            <person name="Azevedo V."/>
            <person name="Bertero M.G."/>
            <person name="Bessieres P."/>
            <person name="Bolotin A."/>
            <person name="Borchert S."/>
            <person name="Borriss R."/>
            <person name="Boursier L."/>
            <person name="Brans A."/>
            <person name="Braun M."/>
            <person name="Brignell S.C."/>
            <person name="Bron S."/>
            <person name="Brouillet S."/>
            <person name="Bruschi C.V."/>
            <person name="Caldwell B."/>
            <person name="Capuano V."/>
            <person name="Carter N.M."/>
            <person name="Choi S.-K."/>
            <person name="Codani J.-J."/>
            <person name="Connerton I.F."/>
            <person name="Cummings N.J."/>
            <person name="Daniel R.A."/>
            <person name="Denizot F."/>
            <person name="Devine K.M."/>
            <person name="Duesterhoeft A."/>
            <person name="Ehrlich S.D."/>
            <person name="Emmerson P.T."/>
            <person name="Entian K.-D."/>
            <person name="Errington J."/>
            <person name="Fabret C."/>
            <person name="Ferrari E."/>
            <person name="Foulger D."/>
            <person name="Fritz C."/>
            <person name="Fujita M."/>
            <person name="Fujita Y."/>
            <person name="Fuma S."/>
            <person name="Galizzi A."/>
            <person name="Galleron N."/>
            <person name="Ghim S.-Y."/>
            <person name="Glaser P."/>
            <person name="Goffeau A."/>
            <person name="Golightly E.J."/>
            <person name="Grandi G."/>
            <person name="Guiseppi G."/>
            <person name="Guy B.J."/>
            <person name="Haga K."/>
            <person name="Haiech J."/>
            <person name="Harwood C.R."/>
            <person name="Henaut A."/>
            <person name="Hilbert H."/>
            <person name="Holsappel S."/>
            <person name="Hosono S."/>
            <person name="Hullo M.-F."/>
            <person name="Itaya M."/>
            <person name="Jones L.-M."/>
            <person name="Joris B."/>
            <person name="Karamata D."/>
            <person name="Kasahara Y."/>
            <person name="Klaerr-Blanchard M."/>
            <person name="Klein C."/>
            <person name="Kobayashi Y."/>
            <person name="Koetter P."/>
            <person name="Koningstein G."/>
            <person name="Krogh S."/>
            <person name="Kumano M."/>
            <person name="Kurita K."/>
            <person name="Lapidus A."/>
            <person name="Lardinois S."/>
            <person name="Lauber J."/>
            <person name="Lazarevic V."/>
            <person name="Lee S.-M."/>
            <person name="Levine A."/>
            <person name="Liu H."/>
            <person name="Masuda S."/>
            <person name="Mauel C."/>
            <person name="Medigue C."/>
            <person name="Medina N."/>
            <person name="Mellado R.P."/>
            <person name="Mizuno M."/>
            <person name="Moestl D."/>
            <person name="Nakai S."/>
            <person name="Noback M."/>
            <person name="Noone D."/>
            <person name="O'Reilly M."/>
            <person name="Ogawa K."/>
            <person name="Ogiwara A."/>
            <person name="Oudega B."/>
            <person name="Park S.-H."/>
            <person name="Parro V."/>
            <person name="Pohl T.M."/>
            <person name="Portetelle D."/>
            <person name="Porwollik S."/>
            <person name="Prescott A.M."/>
            <person name="Presecan E."/>
            <person name="Pujic P."/>
            <person name="Purnelle B."/>
            <person name="Rapoport G."/>
            <person name="Rey M."/>
            <person name="Reynolds S."/>
            <person name="Rieger M."/>
            <person name="Rivolta C."/>
            <person name="Rocha E."/>
            <person name="Roche B."/>
            <person name="Rose M."/>
            <person name="Sadaie Y."/>
            <person name="Sato T."/>
            <person name="Scanlan E."/>
            <person name="Schleich S."/>
            <person name="Schroeter R."/>
            <person name="Scoffone F."/>
            <person name="Sekiguchi J."/>
            <person name="Sekowska A."/>
            <person name="Seror S.J."/>
            <person name="Serror P."/>
            <person name="Shin B.-S."/>
            <person name="Soldo B."/>
            <person name="Sorokin A."/>
            <person name="Tacconi E."/>
            <person name="Takagi T."/>
            <person name="Takahashi H."/>
            <person name="Takemaru K."/>
            <person name="Takeuchi M."/>
            <person name="Tamakoshi A."/>
            <person name="Tanaka T."/>
            <person name="Terpstra P."/>
            <person name="Tognoni A."/>
            <person name="Tosato V."/>
            <person name="Uchiyama S."/>
            <person name="Vandenbol M."/>
            <person name="Vannier F."/>
            <person name="Vassarotti A."/>
            <person name="Viari A."/>
            <person name="Wambutt R."/>
            <person name="Wedler E."/>
            <person name="Wedler H."/>
            <person name="Weitzenegger T."/>
            <person name="Winters P."/>
            <person name="Wipat A."/>
            <person name="Yamamoto H."/>
            <person name="Yamane K."/>
            <person name="Yasumoto K."/>
            <person name="Yata K."/>
            <person name="Yoshida K."/>
            <person name="Yoshikawa H.-F."/>
            <person name="Zumstein E."/>
            <person name="Yoshikawa H."/>
            <person name="Danchin A."/>
        </authorList>
    </citation>
    <scope>NUCLEOTIDE SEQUENCE [LARGE SCALE GENOMIC DNA]</scope>
    <source>
        <strain>168</strain>
    </source>
</reference>
<reference key="3">
    <citation type="journal article" date="1990" name="J. Gen. Microbiol.">
        <title>Characterization and cloning of the gerC locus of Bacillus subtilis 168.</title>
        <authorList>
            <person name="Yazdi M.A."/>
            <person name="Moir A."/>
        </authorList>
    </citation>
    <scope>CHARACTERIZATION OF GERC LOCUS</scope>
</reference>
<reference key="4">
    <citation type="journal article" date="1998" name="Microbiology">
        <title>The gerC locus of Bacillus subtilis, required for menaquinone biosynthesis, is concerned only indirectly with spore germination.</title>
        <authorList>
            <person name="Leatherbarrow A.J.H."/>
            <person name="Yazdi M.A."/>
            <person name="Curson J.P."/>
            <person name="Moir A."/>
        </authorList>
    </citation>
    <scope>FUNCTION</scope>
</reference>
<evidence type="ECO:0000250" key="1"/>
<evidence type="ECO:0000250" key="2">
    <source>
        <dbReference type="UniProtKB" id="P14324"/>
    </source>
</evidence>
<evidence type="ECO:0000250" key="3">
    <source>
        <dbReference type="UniProtKB" id="Q12051"/>
    </source>
</evidence>
<evidence type="ECO:0000269" key="4">
    <source>
    </source>
</evidence>
<evidence type="ECO:0000305" key="5"/>
<feature type="chain" id="PRO_0000124004" description="Heptaprenyl diphosphate synthase component 2">
    <location>
        <begin position="1"/>
        <end position="348"/>
    </location>
</feature>
<feature type="binding site" evidence="2">
    <location>
        <position position="73"/>
    </location>
    <ligand>
        <name>isopentenyl diphosphate</name>
        <dbReference type="ChEBI" id="CHEBI:128769"/>
    </ligand>
</feature>
<feature type="binding site" evidence="2">
    <location>
        <position position="76"/>
    </location>
    <ligand>
        <name>isopentenyl diphosphate</name>
        <dbReference type="ChEBI" id="CHEBI:128769"/>
    </ligand>
</feature>
<feature type="binding site" evidence="3">
    <location>
        <position position="105"/>
    </location>
    <ligand>
        <name>isopentenyl diphosphate</name>
        <dbReference type="ChEBI" id="CHEBI:128769"/>
    </ligand>
</feature>
<feature type="binding site" evidence="2">
    <location>
        <position position="112"/>
    </location>
    <ligand>
        <name>Mg(2+)</name>
        <dbReference type="ChEBI" id="CHEBI:18420"/>
        <label>1</label>
    </ligand>
</feature>
<feature type="binding site" evidence="2">
    <location>
        <position position="112"/>
    </location>
    <ligand>
        <name>Mg(2+)</name>
        <dbReference type="ChEBI" id="CHEBI:18420"/>
        <label>2</label>
    </ligand>
</feature>
<feature type="binding site" evidence="2">
    <location>
        <position position="116"/>
    </location>
    <ligand>
        <name>Mg(2+)</name>
        <dbReference type="ChEBI" id="CHEBI:18420"/>
        <label>1</label>
    </ligand>
</feature>
<feature type="binding site" evidence="2">
    <location>
        <position position="116"/>
    </location>
    <ligand>
        <name>Mg(2+)</name>
        <dbReference type="ChEBI" id="CHEBI:18420"/>
        <label>2</label>
    </ligand>
</feature>
<feature type="binding site" evidence="1">
    <location>
        <position position="121"/>
    </location>
    <ligand>
        <name>all-trans-hexaprenyl diphosphate</name>
        <dbReference type="ChEBI" id="CHEBI:58179"/>
    </ligand>
</feature>
<feature type="binding site" evidence="2">
    <location>
        <position position="122"/>
    </location>
    <ligand>
        <name>isopentenyl diphosphate</name>
        <dbReference type="ChEBI" id="CHEBI:128769"/>
    </ligand>
</feature>
<feature type="binding site" evidence="1">
    <location>
        <position position="198"/>
    </location>
    <ligand>
        <name>all-trans-hexaprenyl diphosphate</name>
        <dbReference type="ChEBI" id="CHEBI:58179"/>
    </ligand>
</feature>
<feature type="binding site" evidence="1">
    <location>
        <position position="199"/>
    </location>
    <ligand>
        <name>all-trans-hexaprenyl diphosphate</name>
        <dbReference type="ChEBI" id="CHEBI:58179"/>
    </ligand>
</feature>
<feature type="binding site" evidence="1">
    <location>
        <position position="236"/>
    </location>
    <ligand>
        <name>all-trans-hexaprenyl diphosphate</name>
        <dbReference type="ChEBI" id="CHEBI:58179"/>
    </ligand>
</feature>
<dbReference type="EC" id="2.5.1.30"/>
<dbReference type="EMBL" id="M80245">
    <property type="protein sequence ID" value="AAA20856.1"/>
    <property type="molecule type" value="Genomic_DNA"/>
</dbReference>
<dbReference type="EMBL" id="AL009126">
    <property type="protein sequence ID" value="CAB14190.1"/>
    <property type="molecule type" value="Genomic_DNA"/>
</dbReference>
<dbReference type="PIR" id="E69630">
    <property type="entry name" value="E69630"/>
</dbReference>
<dbReference type="RefSeq" id="NP_390155.1">
    <property type="nucleotide sequence ID" value="NC_000964.3"/>
</dbReference>
<dbReference type="RefSeq" id="WP_010886555.1">
    <property type="nucleotide sequence ID" value="NC_000964.3"/>
</dbReference>
<dbReference type="SMR" id="P31114"/>
<dbReference type="FunCoup" id="P31114">
    <property type="interactions" value="550"/>
</dbReference>
<dbReference type="STRING" id="224308.BSU22740"/>
<dbReference type="PaxDb" id="224308-BSU22740"/>
<dbReference type="DNASU" id="939002"/>
<dbReference type="EnsemblBacteria" id="CAB14190">
    <property type="protein sequence ID" value="CAB14190"/>
    <property type="gene ID" value="BSU_22740"/>
</dbReference>
<dbReference type="GeneID" id="939002"/>
<dbReference type="KEGG" id="bsu:BSU22740"/>
<dbReference type="eggNOG" id="COG0142">
    <property type="taxonomic scope" value="Bacteria"/>
</dbReference>
<dbReference type="InParanoid" id="P31114"/>
<dbReference type="OrthoDB" id="9805316at2"/>
<dbReference type="PhylomeDB" id="P31114"/>
<dbReference type="BioCyc" id="BSUB:BSU22740-MONOMER"/>
<dbReference type="BioCyc" id="MetaCyc:MONOMER-13770"/>
<dbReference type="BRENDA" id="2.5.1.30">
    <property type="organism ID" value="658"/>
</dbReference>
<dbReference type="SABIO-RK" id="P31114"/>
<dbReference type="Proteomes" id="UP000001570">
    <property type="component" value="Chromosome"/>
</dbReference>
<dbReference type="GO" id="GO:0000010">
    <property type="term" value="F:heptaprenyl diphosphate synthase activity"/>
    <property type="evidence" value="ECO:0007669"/>
    <property type="project" value="UniProtKB-EC"/>
</dbReference>
<dbReference type="GO" id="GO:0046872">
    <property type="term" value="F:metal ion binding"/>
    <property type="evidence" value="ECO:0007669"/>
    <property type="project" value="UniProtKB-KW"/>
</dbReference>
<dbReference type="GO" id="GO:0004659">
    <property type="term" value="F:prenyltransferase activity"/>
    <property type="evidence" value="ECO:0000318"/>
    <property type="project" value="GO_Central"/>
</dbReference>
<dbReference type="GO" id="GO:0016765">
    <property type="term" value="F:transferase activity, transferring alkyl or aryl (other than methyl) groups"/>
    <property type="evidence" value="ECO:0000314"/>
    <property type="project" value="UniProtKB"/>
</dbReference>
<dbReference type="GO" id="GO:0008299">
    <property type="term" value="P:isoprenoid biosynthetic process"/>
    <property type="evidence" value="ECO:0000318"/>
    <property type="project" value="GO_Central"/>
</dbReference>
<dbReference type="GO" id="GO:0009234">
    <property type="term" value="P:menaquinone biosynthetic process"/>
    <property type="evidence" value="ECO:0000315"/>
    <property type="project" value="UniProtKB"/>
</dbReference>
<dbReference type="GO" id="GO:0030435">
    <property type="term" value="P:sporulation resulting in formation of a cellular spore"/>
    <property type="evidence" value="ECO:0007669"/>
    <property type="project" value="UniProtKB-KW"/>
</dbReference>
<dbReference type="CDD" id="cd00685">
    <property type="entry name" value="Trans_IPPS_HT"/>
    <property type="match status" value="1"/>
</dbReference>
<dbReference type="FunFam" id="1.10.600.10:FF:000014">
    <property type="entry name" value="Heptaprenyl diphosphate synthase component II"/>
    <property type="match status" value="1"/>
</dbReference>
<dbReference type="Gene3D" id="1.10.600.10">
    <property type="entry name" value="Farnesyl Diphosphate Synthase"/>
    <property type="match status" value="1"/>
</dbReference>
<dbReference type="InterPro" id="IPR014119">
    <property type="entry name" value="GerC3_HepT"/>
</dbReference>
<dbReference type="InterPro" id="IPR008949">
    <property type="entry name" value="Isoprenoid_synthase_dom_sf"/>
</dbReference>
<dbReference type="InterPro" id="IPR000092">
    <property type="entry name" value="Polyprenyl_synt"/>
</dbReference>
<dbReference type="InterPro" id="IPR033749">
    <property type="entry name" value="Polyprenyl_synt_CS"/>
</dbReference>
<dbReference type="NCBIfam" id="TIGR02748">
    <property type="entry name" value="GerC3_HepT"/>
    <property type="match status" value="1"/>
</dbReference>
<dbReference type="PANTHER" id="PTHR12001:SF69">
    <property type="entry name" value="ALL TRANS-POLYPRENYL-DIPHOSPHATE SYNTHASE PDSS1"/>
    <property type="match status" value="1"/>
</dbReference>
<dbReference type="PANTHER" id="PTHR12001">
    <property type="entry name" value="GERANYLGERANYL PYROPHOSPHATE SYNTHASE"/>
    <property type="match status" value="1"/>
</dbReference>
<dbReference type="Pfam" id="PF00348">
    <property type="entry name" value="polyprenyl_synt"/>
    <property type="match status" value="1"/>
</dbReference>
<dbReference type="SFLD" id="SFLDS00005">
    <property type="entry name" value="Isoprenoid_Synthase_Type_I"/>
    <property type="match status" value="1"/>
</dbReference>
<dbReference type="SUPFAM" id="SSF48576">
    <property type="entry name" value="Terpenoid synthases"/>
    <property type="match status" value="1"/>
</dbReference>
<dbReference type="PROSITE" id="PS00723">
    <property type="entry name" value="POLYPRENYL_SYNTHASE_1"/>
    <property type="match status" value="1"/>
</dbReference>
<dbReference type="PROSITE" id="PS00444">
    <property type="entry name" value="POLYPRENYL_SYNTHASE_2"/>
    <property type="match status" value="1"/>
</dbReference>
<gene>
    <name type="primary">hepT</name>
    <name type="synonym">gerC3</name>
    <name type="synonym">gerCC</name>
    <name type="synonym">hepB</name>
    <name type="ordered locus">BSU22740</name>
</gene>
<name>HEPS2_BACSU</name>
<keyword id="KW-0414">Isoprene biosynthesis</keyword>
<keyword id="KW-0460">Magnesium</keyword>
<keyword id="KW-0479">Metal-binding</keyword>
<keyword id="KW-1185">Reference proteome</keyword>
<keyword id="KW-0749">Sporulation</keyword>
<keyword id="KW-0808">Transferase</keyword>
<accession>P31114</accession>
<comment type="function">
    <text evidence="4">Supplies heptaprenyl diphosphate, the precursor for the side chain of the isoprenoid quinone menaquinone-7 (MQ-7).</text>
</comment>
<comment type="catalytic activity">
    <reaction>
        <text>4 isopentenyl diphosphate + (2E,6E)-farnesyl diphosphate = all-trans-heptaprenyl diphosphate + 4 diphosphate</text>
        <dbReference type="Rhea" id="RHEA:27794"/>
        <dbReference type="ChEBI" id="CHEBI:33019"/>
        <dbReference type="ChEBI" id="CHEBI:58206"/>
        <dbReference type="ChEBI" id="CHEBI:128769"/>
        <dbReference type="ChEBI" id="CHEBI:175763"/>
        <dbReference type="EC" id="2.5.1.30"/>
    </reaction>
</comment>
<comment type="cofactor">
    <cofactor evidence="1">
        <name>Mg(2+)</name>
        <dbReference type="ChEBI" id="CHEBI:18420"/>
    </cofactor>
    <text evidence="1">Binds 2 Mg(2+) ions per subunit.</text>
</comment>
<comment type="subunit">
    <text>Heterodimer of component I and II.</text>
</comment>
<comment type="similarity">
    <text evidence="5">Belongs to the FPP/GGPP synthase family.</text>
</comment>
<sequence length="348" mass="39516">MLNIIRLLAESLPRISDGNENTDVWVNDMKFKMAYSFLNDDIDVIERELEQTVRSDYPLLSEAGLHLLQAGGKRIRPVFVLLSGMFGDYDINKIKYVAVTLEMIHMASLVHDDVIDDAELRRGKPTIKAKWDNRIAMYTGDYMLAGSLEMMTRINEPKAHRILSQTIVEVCLGEIEQIKDKYNMEQNLRTYLRRIKRKTALLIAVSCQLGAIASGADEKIHKALYWFGYYVGMSYQIIDDILDFTSTEEELGKPVGGDLLQGNVTLPVLYALKNPALKNQLKLINSETTQEQLEPIIEEIKKTDAIEASMAVSEMYLQKAFQKLNTLPRGRARSSLAAIAKYIGKRKF</sequence>
<proteinExistence type="evidence at protein level"/>
<organism>
    <name type="scientific">Bacillus subtilis (strain 168)</name>
    <dbReference type="NCBI Taxonomy" id="224308"/>
    <lineage>
        <taxon>Bacteria</taxon>
        <taxon>Bacillati</taxon>
        <taxon>Bacillota</taxon>
        <taxon>Bacilli</taxon>
        <taxon>Bacillales</taxon>
        <taxon>Bacillaceae</taxon>
        <taxon>Bacillus</taxon>
    </lineage>
</organism>